<organism>
    <name type="scientific">Streptococcus gordonii (strain Challis / ATCC 35105 / BCRC 15272 / CH1 / DL1 / V288)</name>
    <dbReference type="NCBI Taxonomy" id="467705"/>
    <lineage>
        <taxon>Bacteria</taxon>
        <taxon>Bacillati</taxon>
        <taxon>Bacillota</taxon>
        <taxon>Bacilli</taxon>
        <taxon>Lactobacillales</taxon>
        <taxon>Streptococcaceae</taxon>
        <taxon>Streptococcus</taxon>
    </lineage>
</organism>
<gene>
    <name evidence="1" type="primary">glgC</name>
    <name type="ordered locus">SGO_1553</name>
</gene>
<dbReference type="EC" id="2.7.7.27" evidence="1"/>
<dbReference type="EMBL" id="CP000725">
    <property type="protein sequence ID" value="ABV09389.1"/>
    <property type="molecule type" value="Genomic_DNA"/>
</dbReference>
<dbReference type="RefSeq" id="WP_012130621.1">
    <property type="nucleotide sequence ID" value="NC_009785.1"/>
</dbReference>
<dbReference type="SMR" id="A8AYH2"/>
<dbReference type="STRING" id="467705.SGO_1553"/>
<dbReference type="KEGG" id="sgo:SGO_1553"/>
<dbReference type="eggNOG" id="COG0448">
    <property type="taxonomic scope" value="Bacteria"/>
</dbReference>
<dbReference type="HOGENOM" id="CLU_029499_14_0_9"/>
<dbReference type="UniPathway" id="UPA00164"/>
<dbReference type="Proteomes" id="UP000001131">
    <property type="component" value="Chromosome"/>
</dbReference>
<dbReference type="GO" id="GO:0005524">
    <property type="term" value="F:ATP binding"/>
    <property type="evidence" value="ECO:0007669"/>
    <property type="project" value="UniProtKB-KW"/>
</dbReference>
<dbReference type="GO" id="GO:0008878">
    <property type="term" value="F:glucose-1-phosphate adenylyltransferase activity"/>
    <property type="evidence" value="ECO:0007669"/>
    <property type="project" value="UniProtKB-UniRule"/>
</dbReference>
<dbReference type="GO" id="GO:0005978">
    <property type="term" value="P:glycogen biosynthetic process"/>
    <property type="evidence" value="ECO:0007669"/>
    <property type="project" value="UniProtKB-UniRule"/>
</dbReference>
<dbReference type="CDD" id="cd02508">
    <property type="entry name" value="ADP_Glucose_PP"/>
    <property type="match status" value="1"/>
</dbReference>
<dbReference type="CDD" id="cd04651">
    <property type="entry name" value="LbH_G1P_AT_C"/>
    <property type="match status" value="1"/>
</dbReference>
<dbReference type="Gene3D" id="2.160.10.10">
    <property type="entry name" value="Hexapeptide repeat proteins"/>
    <property type="match status" value="1"/>
</dbReference>
<dbReference type="Gene3D" id="3.90.550.10">
    <property type="entry name" value="Spore Coat Polysaccharide Biosynthesis Protein SpsA, Chain A"/>
    <property type="match status" value="1"/>
</dbReference>
<dbReference type="HAMAP" id="MF_00624">
    <property type="entry name" value="GlgC"/>
    <property type="match status" value="1"/>
</dbReference>
<dbReference type="InterPro" id="IPR011831">
    <property type="entry name" value="ADP-Glc_PPase"/>
</dbReference>
<dbReference type="InterPro" id="IPR005836">
    <property type="entry name" value="ADP_Glu_pyroP_CS"/>
</dbReference>
<dbReference type="InterPro" id="IPR023049">
    <property type="entry name" value="GlgC_bac"/>
</dbReference>
<dbReference type="InterPro" id="IPR056818">
    <property type="entry name" value="GlmU/GlgC-like_hexapep"/>
</dbReference>
<dbReference type="InterPro" id="IPR005835">
    <property type="entry name" value="NTP_transferase_dom"/>
</dbReference>
<dbReference type="InterPro" id="IPR029044">
    <property type="entry name" value="Nucleotide-diphossugar_trans"/>
</dbReference>
<dbReference type="InterPro" id="IPR011004">
    <property type="entry name" value="Trimer_LpxA-like_sf"/>
</dbReference>
<dbReference type="NCBIfam" id="TIGR02091">
    <property type="entry name" value="glgC"/>
    <property type="match status" value="1"/>
</dbReference>
<dbReference type="NCBIfam" id="NF003670">
    <property type="entry name" value="PRK05293.1"/>
    <property type="match status" value="1"/>
</dbReference>
<dbReference type="PANTHER" id="PTHR43523:SF2">
    <property type="entry name" value="GLUCOSE-1-PHOSPHATE ADENYLYLTRANSFERASE"/>
    <property type="match status" value="1"/>
</dbReference>
<dbReference type="PANTHER" id="PTHR43523">
    <property type="entry name" value="GLUCOSE-1-PHOSPHATE ADENYLYLTRANSFERASE-RELATED"/>
    <property type="match status" value="1"/>
</dbReference>
<dbReference type="Pfam" id="PF24894">
    <property type="entry name" value="Hexapep_GlmU"/>
    <property type="match status" value="1"/>
</dbReference>
<dbReference type="Pfam" id="PF00483">
    <property type="entry name" value="NTP_transferase"/>
    <property type="match status" value="1"/>
</dbReference>
<dbReference type="SUPFAM" id="SSF53448">
    <property type="entry name" value="Nucleotide-diphospho-sugar transferases"/>
    <property type="match status" value="1"/>
</dbReference>
<dbReference type="SUPFAM" id="SSF51161">
    <property type="entry name" value="Trimeric LpxA-like enzymes"/>
    <property type="match status" value="1"/>
</dbReference>
<dbReference type="PROSITE" id="PS00808">
    <property type="entry name" value="ADP_GLC_PYROPHOSPH_1"/>
    <property type="match status" value="1"/>
</dbReference>
<dbReference type="PROSITE" id="PS00809">
    <property type="entry name" value="ADP_GLC_PYROPHOSPH_2"/>
    <property type="match status" value="1"/>
</dbReference>
<dbReference type="PROSITE" id="PS00810">
    <property type="entry name" value="ADP_GLC_PYROPHOSPH_3"/>
    <property type="match status" value="1"/>
</dbReference>
<accession>A8AYH2</accession>
<protein>
    <recommendedName>
        <fullName evidence="1">Glucose-1-phosphate adenylyltransferase</fullName>
        <ecNumber evidence="1">2.7.7.27</ecNumber>
    </recommendedName>
    <alternativeName>
        <fullName evidence="1">ADP-glucose pyrophosphorylase</fullName>
        <shortName evidence="1">ADPGlc PPase</shortName>
    </alternativeName>
    <alternativeName>
        <fullName evidence="1">ADP-glucose synthase</fullName>
    </alternativeName>
</protein>
<feature type="chain" id="PRO_1000082602" description="Glucose-1-phosphate adenylyltransferase">
    <location>
        <begin position="1"/>
        <end position="380"/>
    </location>
</feature>
<feature type="binding site" evidence="1">
    <location>
        <position position="164"/>
    </location>
    <ligand>
        <name>alpha-D-glucose 1-phosphate</name>
        <dbReference type="ChEBI" id="CHEBI:58601"/>
    </ligand>
</feature>
<feature type="binding site" evidence="1">
    <location>
        <begin position="179"/>
        <end position="180"/>
    </location>
    <ligand>
        <name>alpha-D-glucose 1-phosphate</name>
        <dbReference type="ChEBI" id="CHEBI:58601"/>
    </ligand>
</feature>
<feature type="binding site" evidence="1">
    <location>
        <position position="190"/>
    </location>
    <ligand>
        <name>alpha-D-glucose 1-phosphate</name>
        <dbReference type="ChEBI" id="CHEBI:58601"/>
    </ligand>
</feature>
<name>GLGC_STRGC</name>
<evidence type="ECO:0000255" key="1">
    <source>
        <dbReference type="HAMAP-Rule" id="MF_00624"/>
    </source>
</evidence>
<proteinExistence type="inferred from homology"/>
<keyword id="KW-0067">ATP-binding</keyword>
<keyword id="KW-0119">Carbohydrate metabolism</keyword>
<keyword id="KW-0320">Glycogen biosynthesis</keyword>
<keyword id="KW-0321">Glycogen metabolism</keyword>
<keyword id="KW-0547">Nucleotide-binding</keyword>
<keyword id="KW-0548">Nucleotidyltransferase</keyword>
<keyword id="KW-1185">Reference proteome</keyword>
<keyword id="KW-0808">Transferase</keyword>
<comment type="function">
    <text evidence="1">Involved in the biosynthesis of ADP-glucose, a building block required for the elongation reactions to produce glycogen. Catalyzes the reaction between ATP and alpha-D-glucose 1-phosphate (G1P) to produce pyrophosphate and ADP-Glc.</text>
</comment>
<comment type="catalytic activity">
    <reaction evidence="1">
        <text>alpha-D-glucose 1-phosphate + ATP + H(+) = ADP-alpha-D-glucose + diphosphate</text>
        <dbReference type="Rhea" id="RHEA:12120"/>
        <dbReference type="ChEBI" id="CHEBI:15378"/>
        <dbReference type="ChEBI" id="CHEBI:30616"/>
        <dbReference type="ChEBI" id="CHEBI:33019"/>
        <dbReference type="ChEBI" id="CHEBI:57498"/>
        <dbReference type="ChEBI" id="CHEBI:58601"/>
        <dbReference type="EC" id="2.7.7.27"/>
    </reaction>
</comment>
<comment type="pathway">
    <text evidence="1">Glycan biosynthesis; glycogen biosynthesis.</text>
</comment>
<comment type="subunit">
    <text evidence="1">Homotetramer.</text>
</comment>
<comment type="similarity">
    <text evidence="1">Belongs to the bacterial/plant glucose-1-phosphate adenylyltransferase family.</text>
</comment>
<sequence length="380" mass="41880">MKNEMLALILAGGQGTRLGKLTQSIAKPAVQFGGRYRIIDFALSNCANSGIHNVGVITQYQPLALNSHIGNGSSWGLDGINTGVSILQPYSASEGNRWFEGTSHAIFQNIDYIDSINPEYVLILSGDHIYKMDYDDMLQSHKDNNASLTVAVLDVPLKEASRFGIMNTDANNRIVEFEEKPENPKSTKASMGIYIFDWQRLRNMLVVAEKSNVDMSDFGKNVIPNYLESGESVYAYEFAGYWKDVGTVESLWEANMEYINPENALDSRNRRWKIYSRNLISPPNFLSENAKVEDSLVVDGCFVDGTVKHSILSTGAQVRKDAVIEDSVIMSGAIIGQGAKIKRAIIGEGAIIAEGVEIDGTEEVFVVGYNEKVGVPKDED</sequence>
<reference key="1">
    <citation type="journal article" date="2007" name="J. Bacteriol.">
        <title>Genome-wide transcriptional changes in Streptococcus gordonii in response to competence signaling peptide.</title>
        <authorList>
            <person name="Vickerman M.M."/>
            <person name="Iobst S."/>
            <person name="Jesionowski A.M."/>
            <person name="Gill S.R."/>
        </authorList>
    </citation>
    <scope>NUCLEOTIDE SEQUENCE [LARGE SCALE GENOMIC DNA]</scope>
    <source>
        <strain>Challis / ATCC 35105 / BCRC 15272 / CH1 / DL1 / V288</strain>
    </source>
</reference>